<accession>Q8WQC9</accession>
<accession>G5EDY8</accession>
<keyword id="KW-0025">Alternative splicing</keyword>
<keyword id="KW-0053">Apoptosis</keyword>
<keyword id="KW-0963">Cytoplasm</keyword>
<keyword id="KW-0217">Developmental protein</keyword>
<keyword id="KW-0342">GTP-binding</keyword>
<keyword id="KW-0378">Hydrolase</keyword>
<keyword id="KW-0446">Lipid-binding</keyword>
<keyword id="KW-0472">Membrane</keyword>
<keyword id="KW-0496">Mitochondrion</keyword>
<keyword id="KW-1000">Mitochondrion outer membrane</keyword>
<keyword id="KW-0547">Nucleotide-binding</keyword>
<keyword id="KW-1185">Reference proteome</keyword>
<gene>
    <name evidence="18" type="primary">drp-1</name>
    <name evidence="18" type="ORF">T12E12.4</name>
</gene>
<sequence length="712" mass="79974">MENLIPVVNKLQDVFATLGRKEDQIQLPQIVVVGSQSAGKSSVLENLVGRDFLPRGTGIVTRRPLILQLNHVALDDESKRRRSNGTLLTDDWAMFEHTGSKVFTDFDAVRKEIEDETDRVTGVNKGISLLPISLKIYSHRVVSLSLVDLPGITKIPVGDQPVNIEEQIREMILLYISNPSSIILAVTPANQDFATSEPIKLAREVDAGGQRTLAVLTKLDLMDQGTDAMDVLMGKVIPVKLGIIGVVNRSQQNILDNKLIVDAVKDEQSFMQKKYPTLASRNGTPYLAKRLNMLLMHHIRNCLPALKARVSIMNAQCQSDLVAFGEPVEDKNRTLLQIITRFATAYTSTIEGTARNIETTELCGGARICYIFHDTFGRSLESVNPLENLTQLDILTAIRNATGPRPALFVPEVSFELLVKRQIQRLEEPSLRCVELVHEEMQRMVQHCGFTTQQEMIRFPRLYDKINEVVSGVLKERLKPTNELVENLVAIELAYINTKHPEFTEANLVTLLKEELLLDDRHGRSRNRHASTGERAVSAHGEQQLQPVPGVNGVDLNAVLQQQQQQSQNQRASNGFLGLFGNAAASSKTSPQEKQSANFLPEVPETQLGRKLTSREQRDVAIIERLIRNYFIIVRKNIQDSVPKAIMALLVNFVRDNLQSELVRQLYKPDEMDDLLAETEDMAQRRRDTLETMKALQQASVIISEVRETQVW</sequence>
<proteinExistence type="evidence at protein level"/>
<protein>
    <recommendedName>
        <fullName evidence="14">Dynamin-1-like protein drp-1</fullName>
        <ecNumber evidence="1">3.6.5.5</ecNumber>
    </recommendedName>
    <alternativeName>
        <fullName evidence="13 18">Dynamin-related protein drp-1</fullName>
    </alternativeName>
</protein>
<organism evidence="16">
    <name type="scientific">Caenorhabditis elegans</name>
    <dbReference type="NCBI Taxonomy" id="6239"/>
    <lineage>
        <taxon>Eukaryota</taxon>
        <taxon>Metazoa</taxon>
        <taxon>Ecdysozoa</taxon>
        <taxon>Nematoda</taxon>
        <taxon>Chromadorea</taxon>
        <taxon>Rhabditida</taxon>
        <taxon>Rhabditina</taxon>
        <taxon>Rhabditomorpha</taxon>
        <taxon>Rhabditoidea</taxon>
        <taxon>Rhabditidae</taxon>
        <taxon>Peloderinae</taxon>
        <taxon>Caenorhabditis</taxon>
    </lineage>
</organism>
<evidence type="ECO:0000250" key="1">
    <source>
        <dbReference type="UniProtKB" id="O00429"/>
    </source>
</evidence>
<evidence type="ECO:0000255" key="2">
    <source>
        <dbReference type="PROSITE-ProRule" id="PRU00720"/>
    </source>
</evidence>
<evidence type="ECO:0000255" key="3">
    <source>
        <dbReference type="PROSITE-ProRule" id="PRU01055"/>
    </source>
</evidence>
<evidence type="ECO:0000255" key="4">
    <source>
        <dbReference type="RuleBase" id="RU003932"/>
    </source>
</evidence>
<evidence type="ECO:0000256" key="5">
    <source>
        <dbReference type="SAM" id="MobiDB-lite"/>
    </source>
</evidence>
<evidence type="ECO:0000269" key="6">
    <source>
    </source>
</evidence>
<evidence type="ECO:0000269" key="7">
    <source>
    </source>
</evidence>
<evidence type="ECO:0000269" key="8">
    <source>
    </source>
</evidence>
<evidence type="ECO:0000269" key="9">
    <source>
    </source>
</evidence>
<evidence type="ECO:0000269" key="10">
    <source>
    </source>
</evidence>
<evidence type="ECO:0000269" key="11">
    <source>
    </source>
</evidence>
<evidence type="ECO:0000269" key="12">
    <source>
    </source>
</evidence>
<evidence type="ECO:0000303" key="13">
    <source>
    </source>
</evidence>
<evidence type="ECO:0000305" key="14"/>
<evidence type="ECO:0000312" key="15">
    <source>
        <dbReference type="EMBL" id="AAD49861.1"/>
    </source>
</evidence>
<evidence type="ECO:0000312" key="16">
    <source>
        <dbReference type="Proteomes" id="UP000001940"/>
    </source>
</evidence>
<evidence type="ECO:0000312" key="17">
    <source>
        <dbReference type="WormBase" id="T12E12.4a"/>
    </source>
</evidence>
<evidence type="ECO:0000312" key="18">
    <source>
        <dbReference type="WormBase" id="T12E12.4b"/>
    </source>
</evidence>
<feature type="chain" id="PRO_0000457722" description="Dynamin-1-like protein drp-1">
    <location>
        <begin position="1"/>
        <end position="712"/>
    </location>
</feature>
<feature type="domain" description="Dynamin-type G" evidence="3">
    <location>
        <begin position="24"/>
        <end position="304"/>
    </location>
</feature>
<feature type="domain" description="GED" evidence="2">
    <location>
        <begin position="620"/>
        <end position="711"/>
    </location>
</feature>
<feature type="region of interest" description="G1 motif" evidence="3">
    <location>
        <begin position="34"/>
        <end position="41"/>
    </location>
</feature>
<feature type="region of interest" description="G2 motif" evidence="3">
    <location>
        <begin position="60"/>
        <end position="62"/>
    </location>
</feature>
<feature type="region of interest" description="G3 motif" evidence="3">
    <location>
        <begin position="148"/>
        <end position="151"/>
    </location>
</feature>
<feature type="region of interest" description="G4 motif" evidence="3">
    <location>
        <begin position="217"/>
        <end position="220"/>
    </location>
</feature>
<feature type="region of interest" description="G5 motif" evidence="3">
    <location>
        <begin position="247"/>
        <end position="250"/>
    </location>
</feature>
<feature type="region of interest" description="Interaction with caspase ced-9" evidence="11">
    <location>
        <begin position="280"/>
        <end position="502"/>
    </location>
</feature>
<feature type="region of interest" description="Disordered" evidence="5">
    <location>
        <begin position="523"/>
        <end position="542"/>
    </location>
</feature>
<feature type="splice variant" id="VSP_061809" description="In isoform a." evidence="14">
    <location>
        <begin position="537"/>
        <end position="543"/>
    </location>
</feature>
<feature type="mutagenesis site" description="About 80% of cells have irregular mitochondria. Worst affected cells have mitochondria consisting of large blebs with irregular shapes and sizes. Causes the inappropriate survival of 2 or 3 of the 16 cells destined to die during the development of the anterior pharynx." evidence="6 7">
    <original>K</original>
    <variation>A</variation>
    <location>
        <position position="40"/>
    </location>
</feature>
<feature type="mutagenesis site" description="Interaction with caspase ced-9 is no longer enhanced by GTP." evidence="11">
    <original>S</original>
    <variation>N</variation>
    <location>
        <position position="41"/>
    </location>
</feature>
<feature type="mutagenesis site" description="About 100% of cells have irregular mitochondria." evidence="6">
    <original>V</original>
    <variation>F</variation>
    <location>
        <position position="43"/>
    </location>
</feature>
<feature type="mutagenesis site" description="About 95% of cells have irregular mitochondria. Worst affected cells have mitochondria consisting of large blebs with irregular shapes and sizes." evidence="6">
    <original>T</original>
    <variation>A</variation>
    <location>
        <position position="61"/>
    </location>
</feature>
<feature type="mutagenesis site" description="Loss of ced-3-mediated cleavage. Normal mitochondrial fission." evidence="8">
    <original>D</original>
    <variation>A</variation>
    <location>
        <position position="118"/>
    </location>
</feature>
<comment type="function">
    <text evidence="1 6 7 8 9 10 11 12">Functions in mitochondrial division (PubMed:10619028, PubMed:15716954, PubMed:18722182, PubMed:19327994). Functions in peroxisomal division (By similarity). Mediates membrane fission, perhaps mainly of the mitochondrial outer membrane (PubMed:10619028). Mitochondrial fission may be promoted by recruitment to mitochondrial membranes via the egl-1/ced-9 complex (PubMed:21949250). Involved in the coordination of mitochondrial division with autophagy in response to acute heat stress during larval development (PubMed:33734301). Plays a role in apoptosis by promoting mitochondrial elimination and cell-death execution, acting downstream of caspase ced-3, and perhaps independently of FIS1-related protein fis-2, caspase ced-9 and apoptosis-inducing factor AIFM/wah-1 (PubMed:15716954, PubMed:18722182). Role in promoting apoptosis dependent upon cleavage of drp-1 by ced-3 (PubMed:18722182). Involved in negatively modulating longevity in concert with the Insulin/IGF-1-like signaling (IIS) mediated pathway (PubMed:21463460).</text>
</comment>
<comment type="catalytic activity">
    <reaction evidence="1">
        <text>GTP + H2O = GDP + phosphate + H(+)</text>
        <dbReference type="Rhea" id="RHEA:19669"/>
        <dbReference type="ChEBI" id="CHEBI:15377"/>
        <dbReference type="ChEBI" id="CHEBI:15378"/>
        <dbReference type="ChEBI" id="CHEBI:37565"/>
        <dbReference type="ChEBI" id="CHEBI:43474"/>
        <dbReference type="ChEBI" id="CHEBI:58189"/>
        <dbReference type="EC" id="3.6.5.5"/>
    </reaction>
</comment>
<comment type="activity regulation">
    <text evidence="1">GTPase activity is increased by binding to phospholipid membranes.</text>
</comment>
<comment type="subunit">
    <text evidence="11">Interacts (via residues 280-502) with caspase ced-9; the interaction is enhanced by GTP rather than GDP; the interaction is probably direct and may occur at the mitochondrion.</text>
</comment>
<comment type="subcellular location">
    <subcellularLocation>
        <location evidence="6 11">Mitochondrion</location>
    </subcellularLocation>
    <subcellularLocation>
        <location evidence="6">Mitochondrion outer membrane</location>
    </subcellularLocation>
    <subcellularLocation>
        <location evidence="11">Cytoplasm</location>
        <location evidence="11">Cytosol</location>
    </subcellularLocation>
    <text evidence="6 11">Localized to sites of mitochondrial scission (PubMed:10619028). May be recruited to the mitochondrial surface by a ced-9/egl-1 complex (PubMed:21949250).</text>
</comment>
<comment type="alternative products">
    <event type="alternative splicing"/>
    <isoform>
        <id>Q8WQC9-1</id>
        <name evidence="18">b</name>
        <sequence type="displayed"/>
    </isoform>
    <isoform>
        <id>Q8WQC9-2</id>
        <name evidence="17">a</name>
        <sequence type="described" ref="VSP_061809"/>
    </isoform>
</comment>
<comment type="tissue specificity">
    <text evidence="6">Highly expressed in neurons, in intestinal cells and in the body wall, pharyngeal, and vulval muscles.</text>
</comment>
<comment type="disruption phenotype">
    <text evidence="6 10">RNAi-mediated knockdown causes embryonic lethality; onset of lethality is delayed by 12 hr in a caspase ced-3 mutant background (PubMed:10619028). Extremely disorganized gonads, including many nuclei without mitochondria, large clusters of mitochondria without nuclei and cells without either nuclei or mitochondria (PubMed:10619028). Substantial increase in mean lifespan in age-1 mutant background (PubMed:21463460). Substantial increase in mean lifespan in daf-2 mutant (PubMed:21463460).</text>
</comment>
<comment type="similarity">
    <text evidence="3 4">Belongs to the TRAFAC class dynamin-like GTPase superfamily. Dynamin/Fzo/YdjA family.</text>
</comment>
<name>DNM1L_CAEEL</name>
<reference evidence="15" key="1">
    <citation type="journal article" date="1999" name="Mol. Cell">
        <title>C. elegans dynamin-related protein DRP-1 controls severing of the mitochondrial outer membrane.</title>
        <authorList>
            <person name="Labrousse A.M."/>
            <person name="Zappaterra M.D."/>
            <person name="Rube D.A."/>
            <person name="van der Bliek A.M."/>
        </authorList>
    </citation>
    <scope>NUCLEOTIDE SEQUENCE [MRNA] (ISOFORM A)</scope>
    <scope>FUNCTION</scope>
    <scope>SUBCELLULAR LOCATION</scope>
    <scope>TISSUE SPECIFICITY</scope>
    <scope>DISRUPTION PHENOTYPE</scope>
    <scope>MUTAGENESIS OF LYS-40; VAL-43 AND THR-61</scope>
    <source>
        <strain evidence="16">Bristol N2</strain>
    </source>
</reference>
<reference evidence="16" key="2">
    <citation type="journal article" date="1998" name="Science">
        <title>Genome sequence of the nematode C. elegans: a platform for investigating biology.</title>
        <authorList>
            <consortium name="The C. elegans sequencing consortium"/>
        </authorList>
    </citation>
    <scope>NUCLEOTIDE SEQUENCE [LARGE SCALE GENOMIC DNA]</scope>
    <source>
        <strain evidence="16">Bristol N2</strain>
    </source>
</reference>
<reference evidence="14" key="3">
    <citation type="journal article" date="2005" name="Nature">
        <title>DRP-1-mediated mitochondrial fragmentation during EGL-1-induced cell death in C. elegans.</title>
        <authorList>
            <person name="Jagasia R."/>
            <person name="Grote P."/>
            <person name="Westermann B."/>
            <person name="Conradt B."/>
        </authorList>
    </citation>
    <scope>FUNCTION</scope>
    <scope>MUTAGENESIS OF LYS-40</scope>
</reference>
<reference evidence="14" key="4">
    <citation type="journal article" date="2008" name="Mol. Cell">
        <title>Caenorhabditis elegans drp-1 and fis-2 regulate distinct cell-death execution pathways downstream of ced-3 and independent of ced-9.</title>
        <authorList>
            <person name="Breckenridge D.G."/>
            <person name="Kang B.H."/>
            <person name="Kokel D."/>
            <person name="Mitani S."/>
            <person name="Staehelin L.A."/>
            <person name="Xue D."/>
        </authorList>
    </citation>
    <scope>FUNCTION</scope>
    <scope>MUTAGENESIS OF ASP-118</scope>
</reference>
<reference key="5">
    <citation type="journal article" date="2009" name="Curr. Biol.">
        <title>Bcl-2 proteins EGL-1 and CED-9 do not regulate mitochondrial fission or fusion in Caenorhabditis elegans.</title>
        <authorList>
            <person name="Breckenridge D.G."/>
            <person name="Kang B.H."/>
            <person name="Xue D."/>
        </authorList>
    </citation>
    <scope>FUNCTION</scope>
</reference>
<reference evidence="14" key="6">
    <citation type="journal article" date="2011" name="Aging Cell">
        <title>The dynamin-related protein DRP-1 and the insulin signaling pathway cooperate to modulate Caenorhabditis elegans longevity.</title>
        <authorList>
            <person name="Yang C.C."/>
            <person name="Chen D."/>
            <person name="Lee S.S."/>
            <person name="Walter L."/>
        </authorList>
    </citation>
    <scope>FUNCTION</scope>
    <scope>DISRUPTION PHENOTYPE</scope>
</reference>
<reference evidence="14" key="7">
    <citation type="journal article" date="2011" name="Proc. Natl. Acad. Sci. U.S.A.">
        <title>A molecular switch that governs mitochondrial fusion and fission mediated by the BCL2-like protein CED-9 of Caenorhabditis elegans.</title>
        <authorList>
            <person name="Lu Y."/>
            <person name="Rolland S.G."/>
            <person name="Conradt B."/>
        </authorList>
    </citation>
    <scope>INTERACTION WITH CED-9</scope>
    <scope>SUBCELLULAR LOCATION</scope>
    <scope>MUTAGENESIS OF SER-41</scope>
</reference>
<reference evidence="14" key="8">
    <citation type="journal article" date="2021" name="J. Cell Biol.">
        <title>Autophagy facilitates mitochondrial rebuilding after acute heat stress via a DRP-1-dependent process.</title>
        <authorList>
            <person name="Chen Y."/>
            <person name="Leboutet R."/>
            <person name="Largeau C."/>
            <person name="Zentout S."/>
            <person name="Lefebvre C."/>
            <person name="Delahodde A."/>
            <person name="Culetto E."/>
            <person name="Legouis R."/>
        </authorList>
    </citation>
    <scope>FUNCTION</scope>
</reference>
<dbReference type="EC" id="3.6.5.5" evidence="1"/>
<dbReference type="EMBL" id="AF166274">
    <property type="protein sequence ID" value="AAD49861.1"/>
    <property type="molecule type" value="mRNA"/>
</dbReference>
<dbReference type="EMBL" id="BX284604">
    <property type="protein sequence ID" value="CCD70525.1"/>
    <property type="molecule type" value="Genomic_DNA"/>
</dbReference>
<dbReference type="EMBL" id="BX284604">
    <property type="protein sequence ID" value="CCD70526.1"/>
    <property type="molecule type" value="Genomic_DNA"/>
</dbReference>
<dbReference type="RefSeq" id="NP_001023375.1">
    <molecule id="Q8WQC9-2"/>
    <property type="nucleotide sequence ID" value="NM_001028204.4"/>
</dbReference>
<dbReference type="RefSeq" id="NP_741403.2">
    <molecule id="Q8WQC9-1"/>
    <property type="nucleotide sequence ID" value="NM_171344.6"/>
</dbReference>
<dbReference type="SMR" id="Q8WQC9"/>
<dbReference type="DIP" id="DIP-27287N"/>
<dbReference type="FunCoup" id="Q8WQC9">
    <property type="interactions" value="3742"/>
</dbReference>
<dbReference type="IntAct" id="Q8WQC9">
    <property type="interactions" value="3"/>
</dbReference>
<dbReference type="STRING" id="6239.T12E12.4b.3"/>
<dbReference type="PaxDb" id="6239-T12E12.4b.1"/>
<dbReference type="PeptideAtlas" id="Q8WQC9"/>
<dbReference type="EnsemblMetazoa" id="T12E12.4a.1">
    <molecule id="Q8WQC9-2"/>
    <property type="protein sequence ID" value="T12E12.4a.1"/>
    <property type="gene ID" value="WBGene00001093"/>
</dbReference>
<dbReference type="EnsemblMetazoa" id="T12E12.4a.2">
    <molecule id="Q8WQC9-2"/>
    <property type="protein sequence ID" value="T12E12.4a.2"/>
    <property type="gene ID" value="WBGene00001093"/>
</dbReference>
<dbReference type="EnsemblMetazoa" id="T12E12.4b.1">
    <molecule id="Q8WQC9-1"/>
    <property type="protein sequence ID" value="T12E12.4b.1"/>
    <property type="gene ID" value="WBGene00001093"/>
</dbReference>
<dbReference type="EnsemblMetazoa" id="T12E12.4b.2">
    <molecule id="Q8WQC9-1"/>
    <property type="protein sequence ID" value="T12E12.4b.2"/>
    <property type="gene ID" value="WBGene00001093"/>
</dbReference>
<dbReference type="GeneID" id="177336"/>
<dbReference type="KEGG" id="cel:CELE_T12E12.4"/>
<dbReference type="UCSC" id="T12E12.4a.1">
    <molecule id="Q8WQC9-1"/>
    <property type="organism name" value="c. elegans"/>
</dbReference>
<dbReference type="AGR" id="WB:WBGene00001093"/>
<dbReference type="CTD" id="177336"/>
<dbReference type="WormBase" id="T12E12.4a">
    <molecule id="Q8WQC9-2"/>
    <property type="protein sequence ID" value="CE30172"/>
    <property type="gene ID" value="WBGene00001093"/>
    <property type="gene designation" value="drp-1"/>
</dbReference>
<dbReference type="WormBase" id="T12E12.4b">
    <molecule id="Q8WQC9-1"/>
    <property type="protein sequence ID" value="CE30173"/>
    <property type="gene ID" value="WBGene00001093"/>
    <property type="gene designation" value="drp-1"/>
</dbReference>
<dbReference type="eggNOG" id="KOG0446">
    <property type="taxonomic scope" value="Eukaryota"/>
</dbReference>
<dbReference type="GeneTree" id="ENSGT00940000172538"/>
<dbReference type="HOGENOM" id="CLU_008964_5_0_1"/>
<dbReference type="InParanoid" id="Q8WQC9"/>
<dbReference type="OMA" id="CAYINTN"/>
<dbReference type="OrthoDB" id="5061070at2759"/>
<dbReference type="PhylomeDB" id="Q8WQC9"/>
<dbReference type="Reactome" id="R-CEL-75153">
    <property type="pathway name" value="Apoptotic execution phase"/>
</dbReference>
<dbReference type="PRO" id="PR:Q8WQC9"/>
<dbReference type="Proteomes" id="UP000001940">
    <property type="component" value="Chromosome IV"/>
</dbReference>
<dbReference type="Bgee" id="WBGene00001093">
    <property type="expression patterns" value="Expressed in germ line (C elegans) and 4 other cell types or tissues"/>
</dbReference>
<dbReference type="ExpressionAtlas" id="Q8WQC9">
    <property type="expression patterns" value="baseline and differential"/>
</dbReference>
<dbReference type="GO" id="GO:0005737">
    <property type="term" value="C:cytoplasm"/>
    <property type="evidence" value="ECO:0000318"/>
    <property type="project" value="GO_Central"/>
</dbReference>
<dbReference type="GO" id="GO:0005829">
    <property type="term" value="C:cytosol"/>
    <property type="evidence" value="ECO:0007669"/>
    <property type="project" value="UniProtKB-SubCell"/>
</dbReference>
<dbReference type="GO" id="GO:0016020">
    <property type="term" value="C:membrane"/>
    <property type="evidence" value="ECO:0000318"/>
    <property type="project" value="GO_Central"/>
</dbReference>
<dbReference type="GO" id="GO:0005874">
    <property type="term" value="C:microtubule"/>
    <property type="evidence" value="ECO:0000318"/>
    <property type="project" value="GO_Central"/>
</dbReference>
<dbReference type="GO" id="GO:0005741">
    <property type="term" value="C:mitochondrial outer membrane"/>
    <property type="evidence" value="ECO:0007669"/>
    <property type="project" value="UniProtKB-SubCell"/>
</dbReference>
<dbReference type="GO" id="GO:0005739">
    <property type="term" value="C:mitochondrion"/>
    <property type="evidence" value="ECO:0000314"/>
    <property type="project" value="WormBase"/>
</dbReference>
<dbReference type="GO" id="GO:0005525">
    <property type="term" value="F:GTP binding"/>
    <property type="evidence" value="ECO:0000250"/>
    <property type="project" value="WormBase"/>
</dbReference>
<dbReference type="GO" id="GO:0003924">
    <property type="term" value="F:GTPase activity"/>
    <property type="evidence" value="ECO:0000318"/>
    <property type="project" value="GO_Central"/>
</dbReference>
<dbReference type="GO" id="GO:0008289">
    <property type="term" value="F:lipid binding"/>
    <property type="evidence" value="ECO:0007669"/>
    <property type="project" value="UniProtKB-KW"/>
</dbReference>
<dbReference type="GO" id="GO:0008017">
    <property type="term" value="F:microtubule binding"/>
    <property type="evidence" value="ECO:0000318"/>
    <property type="project" value="GO_Central"/>
</dbReference>
<dbReference type="GO" id="GO:0008637">
    <property type="term" value="P:apoptotic mitochondrial changes"/>
    <property type="evidence" value="ECO:0000315"/>
    <property type="project" value="WormBase"/>
</dbReference>
<dbReference type="GO" id="GO:0006915">
    <property type="term" value="P:apoptotic process"/>
    <property type="evidence" value="ECO:0000316"/>
    <property type="project" value="WormBase"/>
</dbReference>
<dbReference type="GO" id="GO:0009792">
    <property type="term" value="P:embryo development ending in birth or egg hatching"/>
    <property type="evidence" value="ECO:0000315"/>
    <property type="project" value="WormBase"/>
</dbReference>
<dbReference type="GO" id="GO:0006897">
    <property type="term" value="P:endocytosis"/>
    <property type="evidence" value="ECO:0000318"/>
    <property type="project" value="GO_Central"/>
</dbReference>
<dbReference type="GO" id="GO:0048312">
    <property type="term" value="P:intracellular distribution of mitochondria"/>
    <property type="evidence" value="ECO:0000318"/>
    <property type="project" value="GO_Central"/>
</dbReference>
<dbReference type="GO" id="GO:0000266">
    <property type="term" value="P:mitochondrial fission"/>
    <property type="evidence" value="ECO:0000315"/>
    <property type="project" value="UniProtKB"/>
</dbReference>
<dbReference type="GO" id="GO:0016559">
    <property type="term" value="P:peroxisome fission"/>
    <property type="evidence" value="ECO:0000318"/>
    <property type="project" value="GO_Central"/>
</dbReference>
<dbReference type="CDD" id="cd08771">
    <property type="entry name" value="DLP_1"/>
    <property type="match status" value="1"/>
</dbReference>
<dbReference type="FunFam" id="1.20.120.1240:FF:000001">
    <property type="entry name" value="Dynamin 1 like"/>
    <property type="match status" value="1"/>
</dbReference>
<dbReference type="FunFam" id="3.40.50.300:FF:000172">
    <property type="entry name" value="Dynamin-1-like protein isoform 1"/>
    <property type="match status" value="1"/>
</dbReference>
<dbReference type="Gene3D" id="1.20.120.1240">
    <property type="entry name" value="Dynamin, middle domain"/>
    <property type="match status" value="1"/>
</dbReference>
<dbReference type="Gene3D" id="3.40.50.300">
    <property type="entry name" value="P-loop containing nucleotide triphosphate hydrolases"/>
    <property type="match status" value="1"/>
</dbReference>
<dbReference type="InterPro" id="IPR022812">
    <property type="entry name" value="Dynamin"/>
</dbReference>
<dbReference type="InterPro" id="IPR001401">
    <property type="entry name" value="Dynamin_GTPase"/>
</dbReference>
<dbReference type="InterPro" id="IPR019762">
    <property type="entry name" value="Dynamin_GTPase_CS"/>
</dbReference>
<dbReference type="InterPro" id="IPR045063">
    <property type="entry name" value="Dynamin_N"/>
</dbReference>
<dbReference type="InterPro" id="IPR000375">
    <property type="entry name" value="Dynamin_stalk"/>
</dbReference>
<dbReference type="InterPro" id="IPR030381">
    <property type="entry name" value="G_DYNAMIN_dom"/>
</dbReference>
<dbReference type="InterPro" id="IPR003130">
    <property type="entry name" value="GED"/>
</dbReference>
<dbReference type="InterPro" id="IPR020850">
    <property type="entry name" value="GED_dom"/>
</dbReference>
<dbReference type="InterPro" id="IPR027417">
    <property type="entry name" value="P-loop_NTPase"/>
</dbReference>
<dbReference type="PANTHER" id="PTHR11566">
    <property type="entry name" value="DYNAMIN"/>
    <property type="match status" value="1"/>
</dbReference>
<dbReference type="PANTHER" id="PTHR11566:SF21">
    <property type="entry name" value="DYNAMIN RELATED PROTEIN 1, ISOFORM A"/>
    <property type="match status" value="1"/>
</dbReference>
<dbReference type="Pfam" id="PF01031">
    <property type="entry name" value="Dynamin_M"/>
    <property type="match status" value="1"/>
</dbReference>
<dbReference type="Pfam" id="PF00350">
    <property type="entry name" value="Dynamin_N"/>
    <property type="match status" value="1"/>
</dbReference>
<dbReference type="Pfam" id="PF02212">
    <property type="entry name" value="GED"/>
    <property type="match status" value="1"/>
</dbReference>
<dbReference type="PRINTS" id="PR00195">
    <property type="entry name" value="DYNAMIN"/>
</dbReference>
<dbReference type="SMART" id="SM00053">
    <property type="entry name" value="DYNc"/>
    <property type="match status" value="1"/>
</dbReference>
<dbReference type="SMART" id="SM00302">
    <property type="entry name" value="GED"/>
    <property type="match status" value="1"/>
</dbReference>
<dbReference type="SUPFAM" id="SSF52540">
    <property type="entry name" value="P-loop containing nucleoside triphosphate hydrolases"/>
    <property type="match status" value="1"/>
</dbReference>
<dbReference type="PROSITE" id="PS00410">
    <property type="entry name" value="G_DYNAMIN_1"/>
    <property type="match status" value="1"/>
</dbReference>
<dbReference type="PROSITE" id="PS51718">
    <property type="entry name" value="G_DYNAMIN_2"/>
    <property type="match status" value="1"/>
</dbReference>
<dbReference type="PROSITE" id="PS51388">
    <property type="entry name" value="GED"/>
    <property type="match status" value="1"/>
</dbReference>